<organism>
    <name type="scientific">Bacillus cereus (strain Q1)</name>
    <dbReference type="NCBI Taxonomy" id="361100"/>
    <lineage>
        <taxon>Bacteria</taxon>
        <taxon>Bacillati</taxon>
        <taxon>Bacillota</taxon>
        <taxon>Bacilli</taxon>
        <taxon>Bacillales</taxon>
        <taxon>Bacillaceae</taxon>
        <taxon>Bacillus</taxon>
        <taxon>Bacillus cereus group</taxon>
    </lineage>
</organism>
<feature type="chain" id="PRO_1000147758" description="1,4-alpha-glucan branching enzyme GlgB">
    <location>
        <begin position="1"/>
        <end position="645"/>
    </location>
</feature>
<feature type="region of interest" description="Disordered" evidence="2">
    <location>
        <begin position="619"/>
        <end position="645"/>
    </location>
</feature>
<feature type="compositionally biased region" description="Polar residues" evidence="2">
    <location>
        <begin position="636"/>
        <end position="645"/>
    </location>
</feature>
<feature type="active site" description="Nucleophile" evidence="1">
    <location>
        <position position="309"/>
    </location>
</feature>
<feature type="active site" description="Proton donor" evidence="1">
    <location>
        <position position="352"/>
    </location>
</feature>
<evidence type="ECO:0000255" key="1">
    <source>
        <dbReference type="HAMAP-Rule" id="MF_00685"/>
    </source>
</evidence>
<evidence type="ECO:0000256" key="2">
    <source>
        <dbReference type="SAM" id="MobiDB-lite"/>
    </source>
</evidence>
<gene>
    <name evidence="1" type="primary">glgB</name>
    <name type="ordered locus">BCQ_4685</name>
</gene>
<accession>B9J2G8</accession>
<protein>
    <recommendedName>
        <fullName evidence="1">1,4-alpha-glucan branching enzyme GlgB</fullName>
        <ecNumber evidence="1">2.4.1.18</ecNumber>
    </recommendedName>
    <alternativeName>
        <fullName evidence="1">1,4-alpha-D-glucan:1,4-alpha-D-glucan 6-glucosyl-transferase</fullName>
    </alternativeName>
    <alternativeName>
        <fullName evidence="1">Alpha-(1-&gt;4)-glucan branching enzyme</fullName>
    </alternativeName>
    <alternativeName>
        <fullName evidence="1">Glycogen branching enzyme</fullName>
        <shortName evidence="1">BE</shortName>
    </alternativeName>
</protein>
<keyword id="KW-0119">Carbohydrate metabolism</keyword>
<keyword id="KW-0320">Glycogen biosynthesis</keyword>
<keyword id="KW-0321">Glycogen metabolism</keyword>
<keyword id="KW-0328">Glycosyltransferase</keyword>
<keyword id="KW-0808">Transferase</keyword>
<comment type="function">
    <text evidence="1">Catalyzes the formation of the alpha-1,6-glucosidic linkages in glycogen by scission of a 1,4-alpha-linked oligosaccharide from growing alpha-1,4-glucan chains and the subsequent attachment of the oligosaccharide to the alpha-1,6 position.</text>
</comment>
<comment type="catalytic activity">
    <reaction evidence="1">
        <text>Transfers a segment of a (1-&gt;4)-alpha-D-glucan chain to a primary hydroxy group in a similar glucan chain.</text>
        <dbReference type="EC" id="2.4.1.18"/>
    </reaction>
</comment>
<comment type="pathway">
    <text evidence="1">Glycan biosynthesis; glycogen biosynthesis.</text>
</comment>
<comment type="subunit">
    <text evidence="1">Monomer.</text>
</comment>
<comment type="similarity">
    <text evidence="1">Belongs to the glycosyl hydrolase 13 family. GlgB subfamily.</text>
</comment>
<reference key="1">
    <citation type="journal article" date="2009" name="J. Bacteriol.">
        <title>Complete genome sequence of the extremophilic Bacillus cereus strain Q1 with industrial applications.</title>
        <authorList>
            <person name="Xiong Z."/>
            <person name="Jiang Y."/>
            <person name="Qi D."/>
            <person name="Lu H."/>
            <person name="Yang F."/>
            <person name="Yang J."/>
            <person name="Chen L."/>
            <person name="Sun L."/>
            <person name="Xu X."/>
            <person name="Xue Y."/>
            <person name="Zhu Y."/>
            <person name="Jin Q."/>
        </authorList>
    </citation>
    <scope>NUCLEOTIDE SEQUENCE [LARGE SCALE GENOMIC DNA]</scope>
    <source>
        <strain>Q1</strain>
    </source>
</reference>
<dbReference type="EC" id="2.4.1.18" evidence="1"/>
<dbReference type="EMBL" id="CP000227">
    <property type="protein sequence ID" value="ACM15111.1"/>
    <property type="molecule type" value="Genomic_DNA"/>
</dbReference>
<dbReference type="SMR" id="B9J2G8"/>
<dbReference type="CAZy" id="CBM48">
    <property type="family name" value="Carbohydrate-Binding Module Family 48"/>
</dbReference>
<dbReference type="CAZy" id="GH13">
    <property type="family name" value="Glycoside Hydrolase Family 13"/>
</dbReference>
<dbReference type="KEGG" id="bcq:BCQ_4685"/>
<dbReference type="HOGENOM" id="CLU_004245_4_0_9"/>
<dbReference type="UniPathway" id="UPA00164"/>
<dbReference type="Proteomes" id="UP000000441">
    <property type="component" value="Chromosome"/>
</dbReference>
<dbReference type="GO" id="GO:0005829">
    <property type="term" value="C:cytosol"/>
    <property type="evidence" value="ECO:0007669"/>
    <property type="project" value="TreeGrafter"/>
</dbReference>
<dbReference type="GO" id="GO:0003844">
    <property type="term" value="F:1,4-alpha-glucan branching enzyme activity"/>
    <property type="evidence" value="ECO:0007669"/>
    <property type="project" value="UniProtKB-UniRule"/>
</dbReference>
<dbReference type="GO" id="GO:0043169">
    <property type="term" value="F:cation binding"/>
    <property type="evidence" value="ECO:0007669"/>
    <property type="project" value="InterPro"/>
</dbReference>
<dbReference type="GO" id="GO:0004553">
    <property type="term" value="F:hydrolase activity, hydrolyzing O-glycosyl compounds"/>
    <property type="evidence" value="ECO:0007669"/>
    <property type="project" value="InterPro"/>
</dbReference>
<dbReference type="GO" id="GO:0005978">
    <property type="term" value="P:glycogen biosynthetic process"/>
    <property type="evidence" value="ECO:0007669"/>
    <property type="project" value="UniProtKB-UniRule"/>
</dbReference>
<dbReference type="CDD" id="cd11322">
    <property type="entry name" value="AmyAc_Glg_BE"/>
    <property type="match status" value="1"/>
</dbReference>
<dbReference type="CDD" id="cd02855">
    <property type="entry name" value="E_set_GBE_prok_N"/>
    <property type="match status" value="1"/>
</dbReference>
<dbReference type="FunFam" id="2.60.40.10:FF:000169">
    <property type="entry name" value="1,4-alpha-glucan branching enzyme GlgB"/>
    <property type="match status" value="1"/>
</dbReference>
<dbReference type="FunFam" id="2.60.40.1180:FF:000002">
    <property type="entry name" value="1,4-alpha-glucan branching enzyme GlgB"/>
    <property type="match status" value="1"/>
</dbReference>
<dbReference type="FunFam" id="3.20.20.80:FF:000003">
    <property type="entry name" value="1,4-alpha-glucan branching enzyme GlgB"/>
    <property type="match status" value="1"/>
</dbReference>
<dbReference type="Gene3D" id="3.20.20.80">
    <property type="entry name" value="Glycosidases"/>
    <property type="match status" value="1"/>
</dbReference>
<dbReference type="Gene3D" id="2.60.40.1180">
    <property type="entry name" value="Golgi alpha-mannosidase II"/>
    <property type="match status" value="1"/>
</dbReference>
<dbReference type="Gene3D" id="2.60.40.10">
    <property type="entry name" value="Immunoglobulins"/>
    <property type="match status" value="1"/>
</dbReference>
<dbReference type="HAMAP" id="MF_00685">
    <property type="entry name" value="GlgB"/>
    <property type="match status" value="1"/>
</dbReference>
<dbReference type="InterPro" id="IPR006048">
    <property type="entry name" value="A-amylase/branching_C"/>
</dbReference>
<dbReference type="InterPro" id="IPR037439">
    <property type="entry name" value="Branching_enzy"/>
</dbReference>
<dbReference type="InterPro" id="IPR006407">
    <property type="entry name" value="GlgB"/>
</dbReference>
<dbReference type="InterPro" id="IPR044143">
    <property type="entry name" value="GlgB_N_E_set_prok"/>
</dbReference>
<dbReference type="InterPro" id="IPR006047">
    <property type="entry name" value="Glyco_hydro_13_cat_dom"/>
</dbReference>
<dbReference type="InterPro" id="IPR004193">
    <property type="entry name" value="Glyco_hydro_13_N"/>
</dbReference>
<dbReference type="InterPro" id="IPR013780">
    <property type="entry name" value="Glyco_hydro_b"/>
</dbReference>
<dbReference type="InterPro" id="IPR017853">
    <property type="entry name" value="Glycoside_hydrolase_SF"/>
</dbReference>
<dbReference type="InterPro" id="IPR013783">
    <property type="entry name" value="Ig-like_fold"/>
</dbReference>
<dbReference type="NCBIfam" id="TIGR01515">
    <property type="entry name" value="branching_enzym"/>
    <property type="match status" value="1"/>
</dbReference>
<dbReference type="NCBIfam" id="NF003811">
    <property type="entry name" value="PRK05402.1"/>
    <property type="match status" value="1"/>
</dbReference>
<dbReference type="NCBIfam" id="NF008967">
    <property type="entry name" value="PRK12313.1"/>
    <property type="match status" value="1"/>
</dbReference>
<dbReference type="PANTHER" id="PTHR43651">
    <property type="entry name" value="1,4-ALPHA-GLUCAN-BRANCHING ENZYME"/>
    <property type="match status" value="1"/>
</dbReference>
<dbReference type="PANTHER" id="PTHR43651:SF3">
    <property type="entry name" value="1,4-ALPHA-GLUCAN-BRANCHING ENZYME"/>
    <property type="match status" value="1"/>
</dbReference>
<dbReference type="Pfam" id="PF00128">
    <property type="entry name" value="Alpha-amylase"/>
    <property type="match status" value="2"/>
</dbReference>
<dbReference type="Pfam" id="PF02806">
    <property type="entry name" value="Alpha-amylase_C"/>
    <property type="match status" value="1"/>
</dbReference>
<dbReference type="Pfam" id="PF02922">
    <property type="entry name" value="CBM_48"/>
    <property type="match status" value="1"/>
</dbReference>
<dbReference type="PIRSF" id="PIRSF000463">
    <property type="entry name" value="GlgB"/>
    <property type="match status" value="1"/>
</dbReference>
<dbReference type="SMART" id="SM00642">
    <property type="entry name" value="Aamy"/>
    <property type="match status" value="1"/>
</dbReference>
<dbReference type="SUPFAM" id="SSF51445">
    <property type="entry name" value="(Trans)glycosidases"/>
    <property type="match status" value="1"/>
</dbReference>
<dbReference type="SUPFAM" id="SSF51011">
    <property type="entry name" value="Glycosyl hydrolase domain"/>
    <property type="match status" value="1"/>
</dbReference>
<name>GLGB_BACCQ</name>
<proteinExistence type="inferred from homology"/>
<sequence>MSVINCEEVKRDEFHTEKYYESYNIFGAHIVTEDEMRGVRFTVWAPHAKAMSVVGDFNEWDYEQHKMLQVTEEGIWSLFIPHIEEREIYKYAIETMAGDVILKADPYAVYAEVRPNTASVVFDIKGYEWNDKNWSRKKKKKSVYKEAMTVYELHFGSWKKKEDGTLYSYREMAEELIPYVVEHQFTHIEIMPLVEHPYDRSWGYQGTGYYAATSRFGTPHDLMHFVDECHKYGIGVILDWVPGHFCKDAHGLYLFDGTPTYEYKDKDVQENPVWGTVNFDLGKREVRNFLISNALFWMRYFHIDGFRVDAVANMLYWNKEGQEQSNEHAVSFLRELNEAVFAEDEDFLMTAEDSTAWPLVTAPTYEGGLGFNYKWNMGWMNDVLKYMECAPEYRKYIHDKMTFSLLYAYSENFILPLSHDEVVHGKKSLLNKMPGDYWDKFAQLRLLYGYFFTHPGKKLLFMGGEFGQFDEWKDLEDLDWNLHDFEMHRYMHDYFKELIALYKRSKPLWQLDHSPEGFQWIDANNNEQSIFSFIRQGDKQEDALVVVCNFTKATYENYKVGVPDFEYYNEILNSDAEQYGGSGQVNKKRLKAIQEPYHNQAAHVEITIPPFGVSILRPVKTRKGSKKQDGSKTKVRSNVTSRGKR</sequence>